<evidence type="ECO:0000255" key="1">
    <source>
        <dbReference type="PROSITE-ProRule" id="PRU00092"/>
    </source>
</evidence>
<evidence type="ECO:0000256" key="2">
    <source>
        <dbReference type="SAM" id="MobiDB-lite"/>
    </source>
</evidence>
<evidence type="ECO:0000269" key="3">
    <source>
    </source>
</evidence>
<evidence type="ECO:0000269" key="4">
    <source>
    </source>
</evidence>
<accession>Q06152</accession>
<accession>D6VYR8</accession>
<keyword id="KW-0963">Cytoplasm</keyword>
<keyword id="KW-0539">Nucleus</keyword>
<keyword id="KW-1185">Reference proteome</keyword>
<protein>
    <recommendedName>
        <fullName>Uncharacterized protein YLR271W</fullName>
    </recommendedName>
</protein>
<reference key="1">
    <citation type="journal article" date="1997" name="Nature">
        <title>The nucleotide sequence of Saccharomyces cerevisiae chromosome XII.</title>
        <authorList>
            <person name="Johnston M."/>
            <person name="Hillier L.W."/>
            <person name="Riles L."/>
            <person name="Albermann K."/>
            <person name="Andre B."/>
            <person name="Ansorge W."/>
            <person name="Benes V."/>
            <person name="Brueckner M."/>
            <person name="Delius H."/>
            <person name="Dubois E."/>
            <person name="Duesterhoeft A."/>
            <person name="Entian K.-D."/>
            <person name="Floeth M."/>
            <person name="Goffeau A."/>
            <person name="Hebling U."/>
            <person name="Heumann K."/>
            <person name="Heuss-Neitzel D."/>
            <person name="Hilbert H."/>
            <person name="Hilger F."/>
            <person name="Kleine K."/>
            <person name="Koetter P."/>
            <person name="Louis E.J."/>
            <person name="Messenguy F."/>
            <person name="Mewes H.-W."/>
            <person name="Miosga T."/>
            <person name="Moestl D."/>
            <person name="Mueller-Auer S."/>
            <person name="Nentwich U."/>
            <person name="Obermaier B."/>
            <person name="Piravandi E."/>
            <person name="Pohl T.M."/>
            <person name="Portetelle D."/>
            <person name="Purnelle B."/>
            <person name="Rechmann S."/>
            <person name="Rieger M."/>
            <person name="Rinke M."/>
            <person name="Rose M."/>
            <person name="Scharfe M."/>
            <person name="Scherens B."/>
            <person name="Scholler P."/>
            <person name="Schwager C."/>
            <person name="Schwarz S."/>
            <person name="Underwood A.P."/>
            <person name="Urrestarazu L.A."/>
            <person name="Vandenbol M."/>
            <person name="Verhasselt P."/>
            <person name="Vierendeels F."/>
            <person name="Voet M."/>
            <person name="Volckaert G."/>
            <person name="Voss H."/>
            <person name="Wambutt R."/>
            <person name="Wedler E."/>
            <person name="Wedler H."/>
            <person name="Zimmermann F.K."/>
            <person name="Zollner A."/>
            <person name="Hani J."/>
            <person name="Hoheisel J.D."/>
        </authorList>
    </citation>
    <scope>NUCLEOTIDE SEQUENCE [LARGE SCALE GENOMIC DNA]</scope>
    <source>
        <strain>ATCC 204508 / S288c</strain>
    </source>
</reference>
<reference key="2">
    <citation type="journal article" date="2014" name="G3 (Bethesda)">
        <title>The reference genome sequence of Saccharomyces cerevisiae: Then and now.</title>
        <authorList>
            <person name="Engel S.R."/>
            <person name="Dietrich F.S."/>
            <person name="Fisk D.G."/>
            <person name="Binkley G."/>
            <person name="Balakrishnan R."/>
            <person name="Costanzo M.C."/>
            <person name="Dwight S.S."/>
            <person name="Hitz B.C."/>
            <person name="Karra K."/>
            <person name="Nash R.S."/>
            <person name="Weng S."/>
            <person name="Wong E.D."/>
            <person name="Lloyd P."/>
            <person name="Skrzypek M.S."/>
            <person name="Miyasato S.R."/>
            <person name="Simison M."/>
            <person name="Cherry J.M."/>
        </authorList>
    </citation>
    <scope>GENOME REANNOTATION</scope>
    <source>
        <strain>ATCC 204508 / S288c</strain>
    </source>
</reference>
<reference key="3">
    <citation type="journal article" date="2007" name="Genome Res.">
        <title>Approaching a complete repository of sequence-verified protein-encoding clones for Saccharomyces cerevisiae.</title>
        <authorList>
            <person name="Hu Y."/>
            <person name="Rolfs A."/>
            <person name="Bhullar B."/>
            <person name="Murthy T.V.S."/>
            <person name="Zhu C."/>
            <person name="Berger M.F."/>
            <person name="Camargo A.A."/>
            <person name="Kelley F."/>
            <person name="McCarron S."/>
            <person name="Jepson D."/>
            <person name="Richardson A."/>
            <person name="Raphael J."/>
            <person name="Moreira D."/>
            <person name="Taycher E."/>
            <person name="Zuo D."/>
            <person name="Mohr S."/>
            <person name="Kane M.F."/>
            <person name="Williamson J."/>
            <person name="Simpson A.J.G."/>
            <person name="Bulyk M.L."/>
            <person name="Harlow E."/>
            <person name="Marsischky G."/>
            <person name="Kolodner R.D."/>
            <person name="LaBaer J."/>
        </authorList>
    </citation>
    <scope>NUCLEOTIDE SEQUENCE [GENOMIC DNA]</scope>
    <source>
        <strain>ATCC 204508 / S288c</strain>
    </source>
</reference>
<reference key="4">
    <citation type="journal article" date="2003" name="Nature">
        <title>Global analysis of protein localization in budding yeast.</title>
        <authorList>
            <person name="Huh W.-K."/>
            <person name="Falvo J.V."/>
            <person name="Gerke L.C."/>
            <person name="Carroll A.S."/>
            <person name="Howson R.W."/>
            <person name="Weissman J.S."/>
            <person name="O'Shea E.K."/>
        </authorList>
    </citation>
    <scope>SUBCELLULAR LOCATION [LARGE SCALE ANALYSIS]</scope>
</reference>
<reference key="5">
    <citation type="journal article" date="2003" name="Nature">
        <title>Global analysis of protein expression in yeast.</title>
        <authorList>
            <person name="Ghaemmaghami S."/>
            <person name="Huh W.-K."/>
            <person name="Bower K."/>
            <person name="Howson R.W."/>
            <person name="Belle A."/>
            <person name="Dephoure N."/>
            <person name="O'Shea E.K."/>
            <person name="Weissman J.S."/>
        </authorList>
    </citation>
    <scope>LEVEL OF PROTEIN EXPRESSION [LARGE SCALE ANALYSIS]</scope>
</reference>
<reference key="6">
    <citation type="journal article" date="2012" name="Proc. Natl. Acad. Sci. U.S.A.">
        <title>N-terminal acetylome analyses and functional insights of the N-terminal acetyltransferase NatB.</title>
        <authorList>
            <person name="Van Damme P."/>
            <person name="Lasa M."/>
            <person name="Polevoda B."/>
            <person name="Gazquez C."/>
            <person name="Elosegui-Artola A."/>
            <person name="Kim D.S."/>
            <person name="De Juan-Pardo E."/>
            <person name="Demeyer K."/>
            <person name="Hole K."/>
            <person name="Larrea E."/>
            <person name="Timmerman E."/>
            <person name="Prieto J."/>
            <person name="Arnesen T."/>
            <person name="Sherman F."/>
            <person name="Gevaert K."/>
            <person name="Aldabe R."/>
        </authorList>
    </citation>
    <scope>IDENTIFICATION BY MASS SPECTROMETRY [LARGE SCALE ANALYSIS]</scope>
</reference>
<gene>
    <name type="ordered locus">YLR271W</name>
</gene>
<feature type="chain" id="PRO_0000247779" description="Uncharacterized protein YLR271W">
    <location>
        <begin position="1"/>
        <end position="274"/>
    </location>
</feature>
<feature type="domain" description="G-patch" evidence="1">
    <location>
        <begin position="41"/>
        <end position="87"/>
    </location>
</feature>
<feature type="region of interest" description="Disordered" evidence="2">
    <location>
        <begin position="1"/>
        <end position="40"/>
    </location>
</feature>
<feature type="compositionally biased region" description="Basic and acidic residues" evidence="2">
    <location>
        <begin position="1"/>
        <end position="15"/>
    </location>
</feature>
<dbReference type="EMBL" id="U17244">
    <property type="protein sequence ID" value="AAB67371.1"/>
    <property type="molecule type" value="Genomic_DNA"/>
</dbReference>
<dbReference type="EMBL" id="AY557945">
    <property type="protein sequence ID" value="AAS56271.1"/>
    <property type="molecule type" value="Genomic_DNA"/>
</dbReference>
<dbReference type="EMBL" id="BK006945">
    <property type="protein sequence ID" value="DAA09584.1"/>
    <property type="molecule type" value="Genomic_DNA"/>
</dbReference>
<dbReference type="PIR" id="S51407">
    <property type="entry name" value="S51407"/>
</dbReference>
<dbReference type="BioGRID" id="31538">
    <property type="interactions" value="37"/>
</dbReference>
<dbReference type="DIP" id="DIP-6448N"/>
<dbReference type="FunCoup" id="Q06152">
    <property type="interactions" value="276"/>
</dbReference>
<dbReference type="IntAct" id="Q06152">
    <property type="interactions" value="2"/>
</dbReference>
<dbReference type="STRING" id="4932.YLR271W"/>
<dbReference type="iPTMnet" id="Q06152"/>
<dbReference type="PaxDb" id="4932-YLR271W"/>
<dbReference type="PeptideAtlas" id="Q06152"/>
<dbReference type="EnsemblFungi" id="YLR271W_mRNA">
    <property type="protein sequence ID" value="YLR271W"/>
    <property type="gene ID" value="YLR271W"/>
</dbReference>
<dbReference type="KEGG" id="sce:YLR271W"/>
<dbReference type="AGR" id="SGD:S000004261"/>
<dbReference type="SGD" id="S000004261">
    <property type="gene designation" value="YLR271W"/>
</dbReference>
<dbReference type="VEuPathDB" id="FungiDB:YLR271W"/>
<dbReference type="eggNOG" id="KOG1994">
    <property type="taxonomic scope" value="Eukaryota"/>
</dbReference>
<dbReference type="GeneTree" id="ENSGT00440000039029"/>
<dbReference type="HOGENOM" id="CLU_046724_0_0_1"/>
<dbReference type="InParanoid" id="Q06152"/>
<dbReference type="OMA" id="DYMNMVI"/>
<dbReference type="OrthoDB" id="786951at2759"/>
<dbReference type="BioCyc" id="YEAST:G3O-32370-MONOMER"/>
<dbReference type="BioGRID-ORCS" id="850976">
    <property type="hits" value="0 hits in 10 CRISPR screens"/>
</dbReference>
<dbReference type="PRO" id="PR:Q06152"/>
<dbReference type="Proteomes" id="UP000002311">
    <property type="component" value="Chromosome XII"/>
</dbReference>
<dbReference type="RNAct" id="Q06152">
    <property type="molecule type" value="protein"/>
</dbReference>
<dbReference type="GO" id="GO:0005737">
    <property type="term" value="C:cytoplasm"/>
    <property type="evidence" value="ECO:0007005"/>
    <property type="project" value="SGD"/>
</dbReference>
<dbReference type="GO" id="GO:0000776">
    <property type="term" value="C:kinetochore"/>
    <property type="evidence" value="ECO:0000318"/>
    <property type="project" value="GO_Central"/>
</dbReference>
<dbReference type="GO" id="GO:0005634">
    <property type="term" value="C:nucleus"/>
    <property type="evidence" value="ECO:0007005"/>
    <property type="project" value="SGD"/>
</dbReference>
<dbReference type="GO" id="GO:0003676">
    <property type="term" value="F:nucleic acid binding"/>
    <property type="evidence" value="ECO:0007669"/>
    <property type="project" value="InterPro"/>
</dbReference>
<dbReference type="InterPro" id="IPR025239">
    <property type="entry name" value="DUF4187"/>
</dbReference>
<dbReference type="InterPro" id="IPR000467">
    <property type="entry name" value="G_patch_dom"/>
</dbReference>
<dbReference type="InterPro" id="IPR039249">
    <property type="entry name" value="GPATCH11"/>
</dbReference>
<dbReference type="PANTHER" id="PTHR21032">
    <property type="entry name" value="G PATCH DOMAIN-CONTAINING PROTEIN 11"/>
    <property type="match status" value="1"/>
</dbReference>
<dbReference type="PANTHER" id="PTHR21032:SF0">
    <property type="entry name" value="G PATCH DOMAIN-CONTAINING PROTEIN 11"/>
    <property type="match status" value="1"/>
</dbReference>
<dbReference type="Pfam" id="PF13821">
    <property type="entry name" value="DUF4187"/>
    <property type="match status" value="1"/>
</dbReference>
<dbReference type="Pfam" id="PF01585">
    <property type="entry name" value="G-patch"/>
    <property type="match status" value="1"/>
</dbReference>
<dbReference type="SMART" id="SM01173">
    <property type="entry name" value="DUF4187"/>
    <property type="match status" value="1"/>
</dbReference>
<dbReference type="SMART" id="SM00443">
    <property type="entry name" value="G_patch"/>
    <property type="match status" value="1"/>
</dbReference>
<dbReference type="PROSITE" id="PS50174">
    <property type="entry name" value="G_PATCH"/>
    <property type="match status" value="1"/>
</dbReference>
<comment type="subcellular location">
    <subcellularLocation>
        <location evidence="3">Cytoplasm</location>
    </subcellularLocation>
    <subcellularLocation>
        <location evidence="3">Nucleus</location>
    </subcellularLocation>
</comment>
<comment type="miscellaneous">
    <text evidence="4">Present with 1470 molecules/cell in log phase SD medium.</text>
</comment>
<organism>
    <name type="scientific">Saccharomyces cerevisiae (strain ATCC 204508 / S288c)</name>
    <name type="common">Baker's yeast</name>
    <dbReference type="NCBI Taxonomy" id="559292"/>
    <lineage>
        <taxon>Eukaryota</taxon>
        <taxon>Fungi</taxon>
        <taxon>Dikarya</taxon>
        <taxon>Ascomycota</taxon>
        <taxon>Saccharomycotina</taxon>
        <taxon>Saccharomycetes</taxon>
        <taxon>Saccharomycetales</taxon>
        <taxon>Saccharomycetaceae</taxon>
        <taxon>Saccharomyces</taxon>
    </lineage>
</organism>
<proteinExistence type="evidence at protein level"/>
<name>YL271_YEAST</name>
<sequence>MEESKTKRKEDRIDLKNTPPQKKSKRDSTNDETARTSLRSIMPRGYKMMENMGYKEGETLGSNESALKEPIKVEINTKRRGIRAEKPDPSTMNDMQMSEQRFIKRESEMKNNKRLKKIWYRIQKVAFEMMGDSDLYNPGEDPRDFNVLWRSYVMQLNEEVAKNDLNNHSNNDNEDKNNMIPMVNESLEASPAIKGEKFGRPSTLIDCDTSIIGSRITKDTELAELEELSIEKRITKLNIFLRSEKYYCFFCGIKYKDEGDLYEHCPGVNEDDHK</sequence>